<feature type="chain" id="PRO_0000109620" description="Protein translocase subunit SecA">
    <location>
        <begin position="1"/>
        <end position="878"/>
    </location>
</feature>
<feature type="binding site" evidence="1">
    <location>
        <position position="79"/>
    </location>
    <ligand>
        <name>ATP</name>
        <dbReference type="ChEBI" id="CHEBI:30616"/>
    </ligand>
</feature>
<feature type="binding site" evidence="1">
    <location>
        <begin position="97"/>
        <end position="101"/>
    </location>
    <ligand>
        <name>ATP</name>
        <dbReference type="ChEBI" id="CHEBI:30616"/>
    </ligand>
</feature>
<feature type="binding site" evidence="1">
    <location>
        <position position="487"/>
    </location>
    <ligand>
        <name>ATP</name>
        <dbReference type="ChEBI" id="CHEBI:30616"/>
    </ligand>
</feature>
<name>SECA_ANTSP</name>
<gene>
    <name evidence="1" type="primary">secA</name>
</gene>
<sequence length="878" mass="102179">MFNFLFSNKINQYQRIVKQINSLDSTYNKYSDQELKQQTNKLKDQIIATQDIDTILPKAFAITKEAIKRATGLLLFDVQLIGAIILNQGKIAEMKTGEGKTLVAMLTAYLNSLFNKGVHIVTVNEYLAKRDATLAKQIFEYLNIHIGIIDQSMHSQERKKQYSCDITYLTNSELGFDYLRDNMAIQKEDLVQRDFFFAIIDEIDSILIDEARTPLIISGPANNKLTEYLEANKVANLLNQNTDYEIDEKNKNIILNENGIKKSENILDINNLYDIQKPWIKYILNALKAKEIFIKNKDYIVKNNEIVIVDEFTGRIMEGRRWSDGLHQAIEAKEKQKIQQENKTLASITYQNLFLLYEKLSGMTGTAKTEEAELEQIYKLKVVEIPTNKLNQRKDLSDLVYKTEYVKWKAVANECFDMYQIGRPTLVGTTSIEKSELLAKILKELQVPYNLLNRKPENITRESEIITQAGRKYTITISTNMAGRGTDIILGGNPQILAKTALTIHINKILNLTQYNTNYKIENEITYILNSINNTLLINNIDINSQDISQSINNIINNNMIQDAKSYKISNIYKIVLNKYKQLCHNEKQEIITLGGLYVIGTERHESRRIDNQLRGRSGRQGDLRSSRFFLSLQDNLLKIFGGDKISDFMQNLNIDEDMPIESSILNKSLSSAQKKIEAYFYDVRKQLFEYDEVLNNQRQAIYIERKRLLKSNYTRDCILEYAESTIEEMLVTYNQQTDISEKTKILSKILKLLNLNIYINNNILLNMEENDIKSFLFEQLRITYDLRESYLEQLRPGLIRQLEKYYLLQQIDYAWQEHINKISILKESIGWRSYGQQDPLIEYKNEAFNLFINMVTYIRQTVIYLTMRSRLIVNIDN</sequence>
<geneLocation type="chloroplast"/>
<keyword id="KW-0067">ATP-binding</keyword>
<keyword id="KW-0150">Chloroplast</keyword>
<keyword id="KW-0472">Membrane</keyword>
<keyword id="KW-0547">Nucleotide-binding</keyword>
<keyword id="KW-0934">Plastid</keyword>
<keyword id="KW-0653">Protein transport</keyword>
<keyword id="KW-0793">Thylakoid</keyword>
<keyword id="KW-1278">Translocase</keyword>
<keyword id="KW-0811">Translocation</keyword>
<keyword id="KW-0813">Transport</keyword>
<comment type="function">
    <text evidence="1">Has a central role in coupling the hydrolysis of ATP to the transfer of proteins across the thylakoid membrane.</text>
</comment>
<comment type="catalytic activity">
    <reaction evidence="1">
        <text>ATP + H2O + cellular proteinSide 1 = ADP + phosphate + cellular proteinSide 2.</text>
        <dbReference type="EC" id="7.4.2.8"/>
    </reaction>
</comment>
<comment type="subcellular location">
    <subcellularLocation>
        <location evidence="1">Plastid</location>
        <location evidence="1">Chloroplast stroma</location>
    </subcellularLocation>
    <subcellularLocation>
        <location evidence="1">Plastid</location>
        <location evidence="1">Chloroplast thylakoid membrane</location>
        <topology evidence="1">Peripheral membrane protein</topology>
    </subcellularLocation>
    <text evidence="1">A minor fraction is associated with the chloroplast thylakoid membrane.</text>
</comment>
<comment type="similarity">
    <text evidence="1">Belongs to the SecA family.</text>
</comment>
<dbReference type="EC" id="7.4.2.8" evidence="1"/>
<dbReference type="EMBL" id="X64705">
    <property type="protein sequence ID" value="CAA45961.1"/>
    <property type="molecule type" value="Genomic_DNA"/>
</dbReference>
<dbReference type="PIR" id="S42707">
    <property type="entry name" value="S42707"/>
</dbReference>
<dbReference type="SMR" id="Q06461"/>
<dbReference type="GO" id="GO:0009570">
    <property type="term" value="C:chloroplast stroma"/>
    <property type="evidence" value="ECO:0007669"/>
    <property type="project" value="UniProtKB-SubCell"/>
</dbReference>
<dbReference type="GO" id="GO:0009535">
    <property type="term" value="C:chloroplast thylakoid membrane"/>
    <property type="evidence" value="ECO:0007669"/>
    <property type="project" value="UniProtKB-SubCell"/>
</dbReference>
<dbReference type="GO" id="GO:0005524">
    <property type="term" value="F:ATP binding"/>
    <property type="evidence" value="ECO:0007669"/>
    <property type="project" value="UniProtKB-UniRule"/>
</dbReference>
<dbReference type="GO" id="GO:0008564">
    <property type="term" value="F:protein-exporting ATPase activity"/>
    <property type="evidence" value="ECO:0007669"/>
    <property type="project" value="UniProtKB-EC"/>
</dbReference>
<dbReference type="GO" id="GO:0065002">
    <property type="term" value="P:intracellular protein transmembrane transport"/>
    <property type="evidence" value="ECO:0007669"/>
    <property type="project" value="UniProtKB-UniRule"/>
</dbReference>
<dbReference type="GO" id="GO:0017038">
    <property type="term" value="P:protein import"/>
    <property type="evidence" value="ECO:0007669"/>
    <property type="project" value="InterPro"/>
</dbReference>
<dbReference type="GO" id="GO:0006605">
    <property type="term" value="P:protein targeting"/>
    <property type="evidence" value="ECO:0007669"/>
    <property type="project" value="UniProtKB-UniRule"/>
</dbReference>
<dbReference type="CDD" id="cd17928">
    <property type="entry name" value="DEXDc_SecA"/>
    <property type="match status" value="1"/>
</dbReference>
<dbReference type="CDD" id="cd18803">
    <property type="entry name" value="SF2_C_secA"/>
    <property type="match status" value="1"/>
</dbReference>
<dbReference type="FunFam" id="3.90.1440.10:FF:000003">
    <property type="entry name" value="Preprotein translocase SecA subunit"/>
    <property type="match status" value="1"/>
</dbReference>
<dbReference type="Gene3D" id="1.10.3060.10">
    <property type="entry name" value="Helical scaffold and wing domains of SecA"/>
    <property type="match status" value="1"/>
</dbReference>
<dbReference type="Gene3D" id="3.40.50.300">
    <property type="entry name" value="P-loop containing nucleotide triphosphate hydrolases"/>
    <property type="match status" value="2"/>
</dbReference>
<dbReference type="Gene3D" id="3.90.1440.10">
    <property type="entry name" value="SecA, preprotein cross-linking domain"/>
    <property type="match status" value="1"/>
</dbReference>
<dbReference type="HAMAP" id="MF_01382">
    <property type="entry name" value="SecA"/>
    <property type="match status" value="1"/>
</dbReference>
<dbReference type="InterPro" id="IPR014001">
    <property type="entry name" value="Helicase_ATP-bd"/>
</dbReference>
<dbReference type="InterPro" id="IPR027417">
    <property type="entry name" value="P-loop_NTPase"/>
</dbReference>
<dbReference type="InterPro" id="IPR000185">
    <property type="entry name" value="SecA"/>
</dbReference>
<dbReference type="InterPro" id="IPR020937">
    <property type="entry name" value="SecA_CS"/>
</dbReference>
<dbReference type="InterPro" id="IPR011115">
    <property type="entry name" value="SecA_DEAD"/>
</dbReference>
<dbReference type="InterPro" id="IPR014018">
    <property type="entry name" value="SecA_motor_DEAD"/>
</dbReference>
<dbReference type="InterPro" id="IPR011130">
    <property type="entry name" value="SecA_preprotein_X-link_dom"/>
</dbReference>
<dbReference type="InterPro" id="IPR044722">
    <property type="entry name" value="SecA_SF2_C"/>
</dbReference>
<dbReference type="InterPro" id="IPR011116">
    <property type="entry name" value="SecA_Wing/Scaffold"/>
</dbReference>
<dbReference type="InterPro" id="IPR036266">
    <property type="entry name" value="SecA_Wing/Scaffold_sf"/>
</dbReference>
<dbReference type="InterPro" id="IPR036670">
    <property type="entry name" value="SecA_X-link_sf"/>
</dbReference>
<dbReference type="NCBIfam" id="NF009538">
    <property type="entry name" value="PRK12904.1"/>
    <property type="match status" value="1"/>
</dbReference>
<dbReference type="NCBIfam" id="TIGR00963">
    <property type="entry name" value="secA"/>
    <property type="match status" value="1"/>
</dbReference>
<dbReference type="PANTHER" id="PTHR30612:SF0">
    <property type="entry name" value="CHLOROPLAST PROTEIN-TRANSPORTING ATPASE"/>
    <property type="match status" value="1"/>
</dbReference>
<dbReference type="PANTHER" id="PTHR30612">
    <property type="entry name" value="SECA INNER MEMBRANE COMPONENT OF SEC PROTEIN SECRETION SYSTEM"/>
    <property type="match status" value="1"/>
</dbReference>
<dbReference type="Pfam" id="PF21090">
    <property type="entry name" value="P-loop_SecA"/>
    <property type="match status" value="1"/>
</dbReference>
<dbReference type="Pfam" id="PF07517">
    <property type="entry name" value="SecA_DEAD"/>
    <property type="match status" value="1"/>
</dbReference>
<dbReference type="Pfam" id="PF01043">
    <property type="entry name" value="SecA_PP_bind"/>
    <property type="match status" value="1"/>
</dbReference>
<dbReference type="Pfam" id="PF07516">
    <property type="entry name" value="SecA_SW"/>
    <property type="match status" value="1"/>
</dbReference>
<dbReference type="PRINTS" id="PR00906">
    <property type="entry name" value="SECA"/>
</dbReference>
<dbReference type="SMART" id="SM00957">
    <property type="entry name" value="SecA_DEAD"/>
    <property type="match status" value="1"/>
</dbReference>
<dbReference type="SMART" id="SM00958">
    <property type="entry name" value="SecA_PP_bind"/>
    <property type="match status" value="1"/>
</dbReference>
<dbReference type="SUPFAM" id="SSF81886">
    <property type="entry name" value="Helical scaffold and wing domains of SecA"/>
    <property type="match status" value="1"/>
</dbReference>
<dbReference type="SUPFAM" id="SSF52540">
    <property type="entry name" value="P-loop containing nucleoside triphosphate hydrolases"/>
    <property type="match status" value="2"/>
</dbReference>
<dbReference type="SUPFAM" id="SSF81767">
    <property type="entry name" value="Pre-protein crosslinking domain of SecA"/>
    <property type="match status" value="1"/>
</dbReference>
<dbReference type="PROSITE" id="PS01312">
    <property type="entry name" value="SECA"/>
    <property type="match status" value="1"/>
</dbReference>
<dbReference type="PROSITE" id="PS51196">
    <property type="entry name" value="SECA_MOTOR_DEAD"/>
    <property type="match status" value="1"/>
</dbReference>
<proteinExistence type="inferred from homology"/>
<protein>
    <recommendedName>
        <fullName evidence="1">Protein translocase subunit SecA</fullName>
        <ecNumber evidence="1">7.4.2.8</ecNumber>
    </recommendedName>
</protein>
<organism>
    <name type="scientific">Antithamnion sp.</name>
    <name type="common">Red alga</name>
    <dbReference type="NCBI Taxonomy" id="2767"/>
    <lineage>
        <taxon>Eukaryota</taxon>
        <taxon>Rhodophyta</taxon>
        <taxon>Florideophyceae</taxon>
        <taxon>Rhodymeniophycidae</taxon>
        <taxon>Ceramiales</taxon>
        <taxon>Ceramiaceae</taxon>
        <taxon>Antithamnion</taxon>
    </lineage>
</organism>
<reference key="1">
    <citation type="journal article" date="1993" name="Mol. Gen. Genet.">
        <title>SecA is plastid-encoded in a red alga: implications for the evolution of plastid genomes and the thylakoid protein import apparatus.</title>
        <authorList>
            <person name="Valentin K.-U."/>
        </authorList>
    </citation>
    <scope>NUCLEOTIDE SEQUENCE [GENOMIC DNA]</scope>
</reference>
<accession>Q06461</accession>
<evidence type="ECO:0000255" key="1">
    <source>
        <dbReference type="HAMAP-Rule" id="MF_01382"/>
    </source>
</evidence>